<feature type="chain" id="PRO_1000016638" description="tRNA uridine 5-carboxymethylaminomethyl modification enzyme MnmG">
    <location>
        <begin position="1"/>
        <end position="654"/>
    </location>
</feature>
<feature type="binding site" evidence="1">
    <location>
        <begin position="17"/>
        <end position="22"/>
    </location>
    <ligand>
        <name>FAD</name>
        <dbReference type="ChEBI" id="CHEBI:57692"/>
    </ligand>
</feature>
<feature type="binding site" evidence="1">
    <location>
        <begin position="289"/>
        <end position="303"/>
    </location>
    <ligand>
        <name>NAD(+)</name>
        <dbReference type="ChEBI" id="CHEBI:57540"/>
    </ligand>
</feature>
<comment type="function">
    <text evidence="1">NAD-binding protein involved in the addition of a carboxymethylaminomethyl (cmnm) group at the wobble position (U34) of certain tRNAs, forming tRNA-cmnm(5)s(2)U34.</text>
</comment>
<comment type="cofactor">
    <cofactor evidence="1">
        <name>FAD</name>
        <dbReference type="ChEBI" id="CHEBI:57692"/>
    </cofactor>
</comment>
<comment type="subunit">
    <text evidence="1">Homodimer. Heterotetramer of two MnmE and two MnmG subunits.</text>
</comment>
<comment type="subcellular location">
    <subcellularLocation>
        <location evidence="1">Cytoplasm</location>
    </subcellularLocation>
</comment>
<comment type="similarity">
    <text evidence="1">Belongs to the MnmG family.</text>
</comment>
<organism>
    <name type="scientific">Prochlorococcus marinus (strain MIT 9515)</name>
    <dbReference type="NCBI Taxonomy" id="167542"/>
    <lineage>
        <taxon>Bacteria</taxon>
        <taxon>Bacillati</taxon>
        <taxon>Cyanobacteriota</taxon>
        <taxon>Cyanophyceae</taxon>
        <taxon>Synechococcales</taxon>
        <taxon>Prochlorococcaceae</taxon>
        <taxon>Prochlorococcus</taxon>
    </lineage>
</organism>
<evidence type="ECO:0000255" key="1">
    <source>
        <dbReference type="HAMAP-Rule" id="MF_00129"/>
    </source>
</evidence>
<protein>
    <recommendedName>
        <fullName evidence="1">tRNA uridine 5-carboxymethylaminomethyl modification enzyme MnmG</fullName>
    </recommendedName>
    <alternativeName>
        <fullName evidence="1">Glucose-inhibited division protein A</fullName>
    </alternativeName>
</protein>
<accession>A2BZ61</accession>
<sequence>MKKQQSSNESFDVIVIGGGHAGCEAAITTAKLGFSTALFTINLDRIAWQPCNPAVGGPAKSQLVHEVDALGGIIGKLADETAIQKRILNASRGPAVWALRAQTDKREYSKRMIEILQNTDNLSLKEAMITELLIKEVETFTKNSKNTTKQIKGVKTFFGTCYSAKSIIITAGTFLEGRIWIGNKSMSAGRSGEQAAQGLTESLHSLGIKTERLKTGTPARVDKKSISFDALDIQPSTASDKYFSFDPKIKNDMPQICCHITRTTQKTHELIRNNLHLTPIYGGFIDSKGPRYCPSIEDKIVKFADKNSHQIFLEPEGINTPEIYVQGFSTGLPENIQLELLRTLPGLNKCKMLRPAYAVEYEYIPATQLKLSLETIEIDNLFSAGQINGTTGYEEAAAQGLVAGINATRKLNMKDPIIFSRESSYIGTMINDLITRDLKEPYRVLTSRSEYRLTLRGDNADRRLTPLGFEIGLIDERRWFAHKEKMKLLKEENSRLENTRLKCTDEIARNIELESGSKIKGSTTLKDLLKRPNVHYSDFIKYDLANKSLPIAVMEGVEIDIKYEGYLKRQQNNIDQINRQSLKSLPIEINYDLIDTLSLEARENLNKIKPTNFGDASKIPGVSKADLTALLVWLKIKEIKKEKTNSFVEKKLSS</sequence>
<keyword id="KW-0963">Cytoplasm</keyword>
<keyword id="KW-0274">FAD</keyword>
<keyword id="KW-0285">Flavoprotein</keyword>
<keyword id="KW-0520">NAD</keyword>
<keyword id="KW-0819">tRNA processing</keyword>
<name>MNMG_PROM5</name>
<dbReference type="EMBL" id="CP000552">
    <property type="protein sequence ID" value="ABM73072.1"/>
    <property type="molecule type" value="Genomic_DNA"/>
</dbReference>
<dbReference type="RefSeq" id="WP_011821156.1">
    <property type="nucleotide sequence ID" value="NC_008817.1"/>
</dbReference>
<dbReference type="SMR" id="A2BZ61"/>
<dbReference type="STRING" id="167542.P9515_18651"/>
<dbReference type="GeneID" id="60201743"/>
<dbReference type="KEGG" id="pmc:P9515_18651"/>
<dbReference type="eggNOG" id="COG0445">
    <property type="taxonomic scope" value="Bacteria"/>
</dbReference>
<dbReference type="HOGENOM" id="CLU_007831_2_2_3"/>
<dbReference type="OrthoDB" id="9815560at2"/>
<dbReference type="Proteomes" id="UP000001589">
    <property type="component" value="Chromosome"/>
</dbReference>
<dbReference type="GO" id="GO:0005737">
    <property type="term" value="C:cytoplasm"/>
    <property type="evidence" value="ECO:0007669"/>
    <property type="project" value="UniProtKB-SubCell"/>
</dbReference>
<dbReference type="GO" id="GO:0050660">
    <property type="term" value="F:flavin adenine dinucleotide binding"/>
    <property type="evidence" value="ECO:0007669"/>
    <property type="project" value="UniProtKB-UniRule"/>
</dbReference>
<dbReference type="GO" id="GO:0030488">
    <property type="term" value="P:tRNA methylation"/>
    <property type="evidence" value="ECO:0007669"/>
    <property type="project" value="TreeGrafter"/>
</dbReference>
<dbReference type="GO" id="GO:0002098">
    <property type="term" value="P:tRNA wobble uridine modification"/>
    <property type="evidence" value="ECO:0007669"/>
    <property type="project" value="InterPro"/>
</dbReference>
<dbReference type="FunFam" id="1.10.10.1800:FF:000001">
    <property type="entry name" value="tRNA uridine 5-carboxymethylaminomethyl modification enzyme MnmG"/>
    <property type="match status" value="1"/>
</dbReference>
<dbReference type="FunFam" id="1.10.150.570:FF:000001">
    <property type="entry name" value="tRNA uridine 5-carboxymethylaminomethyl modification enzyme MnmG"/>
    <property type="match status" value="1"/>
</dbReference>
<dbReference type="FunFam" id="3.50.50.60:FF:000094">
    <property type="entry name" value="tRNA uridine 5-carboxymethylaminomethyl modification enzyme MnmG"/>
    <property type="match status" value="1"/>
</dbReference>
<dbReference type="FunFam" id="3.50.50.60:FF:000119">
    <property type="entry name" value="tRNA uridine 5-carboxymethylaminomethyl modification enzyme MnmG"/>
    <property type="match status" value="1"/>
</dbReference>
<dbReference type="Gene3D" id="3.50.50.60">
    <property type="entry name" value="FAD/NAD(P)-binding domain"/>
    <property type="match status" value="2"/>
</dbReference>
<dbReference type="Gene3D" id="1.10.150.570">
    <property type="entry name" value="GidA associated domain, C-terminal subdomain"/>
    <property type="match status" value="1"/>
</dbReference>
<dbReference type="Gene3D" id="1.10.10.1800">
    <property type="entry name" value="tRNA uridine 5-carboxymethylaminomethyl modification enzyme MnmG/GidA"/>
    <property type="match status" value="1"/>
</dbReference>
<dbReference type="HAMAP" id="MF_00129">
    <property type="entry name" value="MnmG_GidA"/>
    <property type="match status" value="1"/>
</dbReference>
<dbReference type="InterPro" id="IPR036188">
    <property type="entry name" value="FAD/NAD-bd_sf"/>
</dbReference>
<dbReference type="InterPro" id="IPR049312">
    <property type="entry name" value="GIDA_C_N"/>
</dbReference>
<dbReference type="InterPro" id="IPR004416">
    <property type="entry name" value="MnmG"/>
</dbReference>
<dbReference type="InterPro" id="IPR002218">
    <property type="entry name" value="MnmG-rel"/>
</dbReference>
<dbReference type="InterPro" id="IPR020595">
    <property type="entry name" value="MnmG-rel_CS"/>
</dbReference>
<dbReference type="InterPro" id="IPR026904">
    <property type="entry name" value="MnmG_C"/>
</dbReference>
<dbReference type="InterPro" id="IPR047001">
    <property type="entry name" value="MnmG_C_subdom"/>
</dbReference>
<dbReference type="InterPro" id="IPR044920">
    <property type="entry name" value="MnmG_C_subdom_sf"/>
</dbReference>
<dbReference type="InterPro" id="IPR040131">
    <property type="entry name" value="MnmG_N"/>
</dbReference>
<dbReference type="NCBIfam" id="TIGR00136">
    <property type="entry name" value="mnmG_gidA"/>
    <property type="match status" value="1"/>
</dbReference>
<dbReference type="PANTHER" id="PTHR11806">
    <property type="entry name" value="GLUCOSE INHIBITED DIVISION PROTEIN A"/>
    <property type="match status" value="1"/>
</dbReference>
<dbReference type="PANTHER" id="PTHR11806:SF0">
    <property type="entry name" value="PROTEIN MTO1 HOMOLOG, MITOCHONDRIAL"/>
    <property type="match status" value="1"/>
</dbReference>
<dbReference type="Pfam" id="PF01134">
    <property type="entry name" value="GIDA"/>
    <property type="match status" value="1"/>
</dbReference>
<dbReference type="Pfam" id="PF21680">
    <property type="entry name" value="GIDA_C_1st"/>
    <property type="match status" value="1"/>
</dbReference>
<dbReference type="Pfam" id="PF13932">
    <property type="entry name" value="SAM_GIDA_C"/>
    <property type="match status" value="1"/>
</dbReference>
<dbReference type="SMART" id="SM01228">
    <property type="entry name" value="GIDA_assoc_3"/>
    <property type="match status" value="1"/>
</dbReference>
<dbReference type="SUPFAM" id="SSF51905">
    <property type="entry name" value="FAD/NAD(P)-binding domain"/>
    <property type="match status" value="1"/>
</dbReference>
<dbReference type="PROSITE" id="PS01280">
    <property type="entry name" value="GIDA_1"/>
    <property type="match status" value="1"/>
</dbReference>
<dbReference type="PROSITE" id="PS01281">
    <property type="entry name" value="GIDA_2"/>
    <property type="match status" value="1"/>
</dbReference>
<reference key="1">
    <citation type="journal article" date="2007" name="PLoS Genet.">
        <title>Patterns and implications of gene gain and loss in the evolution of Prochlorococcus.</title>
        <authorList>
            <person name="Kettler G.C."/>
            <person name="Martiny A.C."/>
            <person name="Huang K."/>
            <person name="Zucker J."/>
            <person name="Coleman M.L."/>
            <person name="Rodrigue S."/>
            <person name="Chen F."/>
            <person name="Lapidus A."/>
            <person name="Ferriera S."/>
            <person name="Johnson J."/>
            <person name="Steglich C."/>
            <person name="Church G.M."/>
            <person name="Richardson P."/>
            <person name="Chisholm S.W."/>
        </authorList>
    </citation>
    <scope>NUCLEOTIDE SEQUENCE [LARGE SCALE GENOMIC DNA]</scope>
    <source>
        <strain>MIT 9515</strain>
    </source>
</reference>
<proteinExistence type="inferred from homology"/>
<gene>
    <name evidence="1" type="primary">mnmG</name>
    <name evidence="1" type="synonym">gidA</name>
    <name type="ordered locus">P9515_18651</name>
</gene>